<accession>P0CZ41</accession>
<accession>Q8K5Z0</accession>
<feature type="chain" id="PRO_0000411258" description="UvrABC system protein A">
    <location>
        <begin position="1"/>
        <end position="942"/>
    </location>
</feature>
<feature type="domain" description="ABC transporter 1" evidence="1">
    <location>
        <begin position="308"/>
        <end position="589"/>
    </location>
</feature>
<feature type="domain" description="ABC transporter 2" evidence="1">
    <location>
        <begin position="609"/>
        <end position="937"/>
    </location>
</feature>
<feature type="zinc finger region" description="C4-type" evidence="1">
    <location>
        <begin position="251"/>
        <end position="278"/>
    </location>
</feature>
<feature type="zinc finger region" description="C4-type" evidence="1">
    <location>
        <begin position="740"/>
        <end position="766"/>
    </location>
</feature>
<feature type="binding site" evidence="1">
    <location>
        <begin position="32"/>
        <end position="39"/>
    </location>
    <ligand>
        <name>ATP</name>
        <dbReference type="ChEBI" id="CHEBI:30616"/>
    </ligand>
</feature>
<feature type="binding site" evidence="1">
    <location>
        <begin position="641"/>
        <end position="648"/>
    </location>
    <ligand>
        <name>ATP</name>
        <dbReference type="ChEBI" id="CHEBI:30616"/>
    </ligand>
</feature>
<gene>
    <name evidence="1" type="primary">uvrA</name>
    <name type="ordered locus">SPs0290</name>
</gene>
<organism>
    <name type="scientific">Streptococcus pyogenes serotype M3 (strain SSI-1)</name>
    <dbReference type="NCBI Taxonomy" id="193567"/>
    <lineage>
        <taxon>Bacteria</taxon>
        <taxon>Bacillati</taxon>
        <taxon>Bacillota</taxon>
        <taxon>Bacilli</taxon>
        <taxon>Lactobacillales</taxon>
        <taxon>Streptococcaceae</taxon>
        <taxon>Streptococcus</taxon>
    </lineage>
</organism>
<protein>
    <recommendedName>
        <fullName evidence="1">UvrABC system protein A</fullName>
        <shortName evidence="1">UvrA protein</shortName>
    </recommendedName>
    <alternativeName>
        <fullName evidence="1">Excinuclease ABC subunit A</fullName>
    </alternativeName>
</protein>
<comment type="function">
    <text evidence="1">The UvrABC repair system catalyzes the recognition and processing of DNA lesions. UvrA is an ATPase and a DNA-binding protein. A damage recognition complex composed of 2 UvrA and 2 UvrB subunits scans DNA for abnormalities. When the presence of a lesion has been verified by UvrB, the UvrA molecules dissociate.</text>
</comment>
<comment type="subunit">
    <text evidence="1">Forms a heterotetramer with UvrB during the search for lesions.</text>
</comment>
<comment type="subcellular location">
    <subcellularLocation>
        <location evidence="1">Cytoplasm</location>
    </subcellularLocation>
</comment>
<comment type="similarity">
    <text evidence="1">Belongs to the ABC transporter superfamily. UvrA family.</text>
</comment>
<comment type="sequence caution" evidence="2">
    <conflict type="erroneous initiation">
        <sequence resource="EMBL-CDS" id="BAC63385"/>
    </conflict>
</comment>
<name>UVRA_STRPQ</name>
<evidence type="ECO:0000255" key="1">
    <source>
        <dbReference type="HAMAP-Rule" id="MF_00205"/>
    </source>
</evidence>
<evidence type="ECO:0000305" key="2"/>
<proteinExistence type="inferred from homology"/>
<reference key="1">
    <citation type="journal article" date="2003" name="Genome Res.">
        <title>Genome sequence of an M3 strain of Streptococcus pyogenes reveals a large-scale genomic rearrangement in invasive strains and new insights into phage evolution.</title>
        <authorList>
            <person name="Nakagawa I."/>
            <person name="Kurokawa K."/>
            <person name="Yamashita A."/>
            <person name="Nakata M."/>
            <person name="Tomiyasu Y."/>
            <person name="Okahashi N."/>
            <person name="Kawabata S."/>
            <person name="Yamazaki K."/>
            <person name="Shiba T."/>
            <person name="Yasunaga T."/>
            <person name="Hayashi H."/>
            <person name="Hattori M."/>
            <person name="Hamada S."/>
        </authorList>
    </citation>
    <scope>NUCLEOTIDE SEQUENCE [LARGE SCALE GENOMIC DNA]</scope>
    <source>
        <strain>SSI-1</strain>
    </source>
</reference>
<sequence length="942" mass="104034">MQNKIIIHGARAHNLKNIDVEIPRDKLVVVTGLSGSGKSSLAFDTIYAEGQRRYVESLSAYARQFLGNMEKPDVDSIDGLSPAISIDQKTTSKNPRSTVGTVTEINDYLRLLYARVGTPYCINGHGAITASSAEQIVEQVLALPERTRMQILAPIVRRKKGQHKTIFEKIQKDGYVRVRVDGDIFDVTEVPELSKSKMHNIEVVIDRLVNKDGIRSRLFDSVEAALRLGDGYLMIDTMDGNELLFSEHYSCPVCGFTVPELEPRLFSFNAPFGSCPTCDGLGIKLEVDLDLVVPDPSKSLKEGALAPWNPISSNYYPTMLEQAMASFGVDMDTPFEALTEEERDLVLYGSGDREFHFHYVNDFGGERNIDIPFEGVVTNVNRRYHETNSDYTRNVMRGYMNELTCATCHGYRLNDQALCVHVGGEEGPHIGQISELSIADHLQLLEELELTENESTIAKPIVKEIHDRLTFLNNVGLNYLTLSRAAGTLSGGESQRIRLATQIGSNLSGVLYILDEPSIGLHQRDNDRLIESLKKMRDLGNTLIVVEHDEDTMMQADWLIDVGPGAGEFGGEIIASGTPKQVAKNKKSITGQYLSGKKFIPVPLERRSGNGRFIEIKGAAQNNLQSLDVRFPLGKFIAVTGVSGSGKSTLVNSILKKAVAQKLNRNADKPGKYHSISGIEHIERLIDIDQSPIGRTPRSNPATYTGVFDDIRDLFAQTNEAKIRGYKKGRFSFNVKGGRCEACSGDGIIKIEMHFLPDVYVPCEVCHGRRYNSETLEVHYKEKNIAEVLDMTVDDALVFFSAIPKIARKIQTIKDVGLGYVTLGQPATTLSGGEAQRMKLASELHKRSTGKSLYILDEPTTGLHTDDIARLLKVLERFVDDGNTVLVIEHNLDVIKSADHIIDLGPEGGVGGGQIVATGTPEEVAQVKESYTGHYLKVKLQQ</sequence>
<dbReference type="EMBL" id="BA000034">
    <property type="protein sequence ID" value="BAC63385.1"/>
    <property type="status" value="ALT_INIT"/>
    <property type="molecule type" value="Genomic_DNA"/>
</dbReference>
<dbReference type="RefSeq" id="WP_011054967.1">
    <property type="nucleotide sequence ID" value="NC_004606.1"/>
</dbReference>
<dbReference type="SMR" id="P0CZ41"/>
<dbReference type="KEGG" id="sps:SPs0290"/>
<dbReference type="HOGENOM" id="CLU_001370_0_2_9"/>
<dbReference type="GO" id="GO:0005737">
    <property type="term" value="C:cytoplasm"/>
    <property type="evidence" value="ECO:0007669"/>
    <property type="project" value="UniProtKB-SubCell"/>
</dbReference>
<dbReference type="GO" id="GO:0009380">
    <property type="term" value="C:excinuclease repair complex"/>
    <property type="evidence" value="ECO:0007669"/>
    <property type="project" value="InterPro"/>
</dbReference>
<dbReference type="GO" id="GO:0005524">
    <property type="term" value="F:ATP binding"/>
    <property type="evidence" value="ECO:0007669"/>
    <property type="project" value="UniProtKB-UniRule"/>
</dbReference>
<dbReference type="GO" id="GO:0016887">
    <property type="term" value="F:ATP hydrolysis activity"/>
    <property type="evidence" value="ECO:0007669"/>
    <property type="project" value="InterPro"/>
</dbReference>
<dbReference type="GO" id="GO:0003677">
    <property type="term" value="F:DNA binding"/>
    <property type="evidence" value="ECO:0007669"/>
    <property type="project" value="UniProtKB-UniRule"/>
</dbReference>
<dbReference type="GO" id="GO:0009381">
    <property type="term" value="F:excinuclease ABC activity"/>
    <property type="evidence" value="ECO:0007669"/>
    <property type="project" value="UniProtKB-UniRule"/>
</dbReference>
<dbReference type="GO" id="GO:0008270">
    <property type="term" value="F:zinc ion binding"/>
    <property type="evidence" value="ECO:0007669"/>
    <property type="project" value="UniProtKB-UniRule"/>
</dbReference>
<dbReference type="GO" id="GO:0006289">
    <property type="term" value="P:nucleotide-excision repair"/>
    <property type="evidence" value="ECO:0007669"/>
    <property type="project" value="UniProtKB-UniRule"/>
</dbReference>
<dbReference type="GO" id="GO:0009432">
    <property type="term" value="P:SOS response"/>
    <property type="evidence" value="ECO:0007669"/>
    <property type="project" value="UniProtKB-UniRule"/>
</dbReference>
<dbReference type="CDD" id="cd03270">
    <property type="entry name" value="ABC_UvrA_I"/>
    <property type="match status" value="1"/>
</dbReference>
<dbReference type="CDD" id="cd03271">
    <property type="entry name" value="ABC_UvrA_II"/>
    <property type="match status" value="1"/>
</dbReference>
<dbReference type="FunFam" id="1.20.1580.10:FF:000002">
    <property type="entry name" value="UvrABC system protein A"/>
    <property type="match status" value="1"/>
</dbReference>
<dbReference type="FunFam" id="3.40.50.300:FF:000028">
    <property type="entry name" value="UvrABC system protein A"/>
    <property type="match status" value="1"/>
</dbReference>
<dbReference type="Gene3D" id="3.30.190.20">
    <property type="match status" value="1"/>
</dbReference>
<dbReference type="Gene3D" id="1.10.8.280">
    <property type="entry name" value="ABC transporter ATPase domain-like"/>
    <property type="match status" value="1"/>
</dbReference>
<dbReference type="Gene3D" id="1.20.1580.10">
    <property type="entry name" value="ABC transporter ATPase like domain"/>
    <property type="match status" value="3"/>
</dbReference>
<dbReference type="Gene3D" id="3.40.50.300">
    <property type="entry name" value="P-loop containing nucleotide triphosphate hydrolases"/>
    <property type="match status" value="3"/>
</dbReference>
<dbReference type="HAMAP" id="MF_00205">
    <property type="entry name" value="UvrA"/>
    <property type="match status" value="1"/>
</dbReference>
<dbReference type="InterPro" id="IPR003593">
    <property type="entry name" value="AAA+_ATPase"/>
</dbReference>
<dbReference type="InterPro" id="IPR003439">
    <property type="entry name" value="ABC_transporter-like_ATP-bd"/>
</dbReference>
<dbReference type="InterPro" id="IPR017871">
    <property type="entry name" value="ABC_transporter-like_CS"/>
</dbReference>
<dbReference type="InterPro" id="IPR027417">
    <property type="entry name" value="P-loop_NTPase"/>
</dbReference>
<dbReference type="InterPro" id="IPR004602">
    <property type="entry name" value="UvrA"/>
</dbReference>
<dbReference type="InterPro" id="IPR041552">
    <property type="entry name" value="UvrA_DNA-bd"/>
</dbReference>
<dbReference type="InterPro" id="IPR041102">
    <property type="entry name" value="UvrA_inter"/>
</dbReference>
<dbReference type="NCBIfam" id="NF001503">
    <property type="entry name" value="PRK00349.1"/>
    <property type="match status" value="1"/>
</dbReference>
<dbReference type="NCBIfam" id="TIGR00630">
    <property type="entry name" value="uvra"/>
    <property type="match status" value="1"/>
</dbReference>
<dbReference type="PANTHER" id="PTHR43152">
    <property type="entry name" value="UVRABC SYSTEM PROTEIN A"/>
    <property type="match status" value="1"/>
</dbReference>
<dbReference type="PANTHER" id="PTHR43152:SF3">
    <property type="entry name" value="UVRABC SYSTEM PROTEIN A"/>
    <property type="match status" value="1"/>
</dbReference>
<dbReference type="Pfam" id="PF17755">
    <property type="entry name" value="UvrA_DNA-bind"/>
    <property type="match status" value="1"/>
</dbReference>
<dbReference type="Pfam" id="PF17760">
    <property type="entry name" value="UvrA_inter"/>
    <property type="match status" value="1"/>
</dbReference>
<dbReference type="SMART" id="SM00382">
    <property type="entry name" value="AAA"/>
    <property type="match status" value="1"/>
</dbReference>
<dbReference type="SUPFAM" id="SSF52540">
    <property type="entry name" value="P-loop containing nucleoside triphosphate hydrolases"/>
    <property type="match status" value="2"/>
</dbReference>
<dbReference type="PROSITE" id="PS00211">
    <property type="entry name" value="ABC_TRANSPORTER_1"/>
    <property type="match status" value="2"/>
</dbReference>
<dbReference type="PROSITE" id="PS50893">
    <property type="entry name" value="ABC_TRANSPORTER_2"/>
    <property type="match status" value="2"/>
</dbReference>
<keyword id="KW-0067">ATP-binding</keyword>
<keyword id="KW-0963">Cytoplasm</keyword>
<keyword id="KW-0227">DNA damage</keyword>
<keyword id="KW-0228">DNA excision</keyword>
<keyword id="KW-0234">DNA repair</keyword>
<keyword id="KW-0238">DNA-binding</keyword>
<keyword id="KW-0267">Excision nuclease</keyword>
<keyword id="KW-0479">Metal-binding</keyword>
<keyword id="KW-0547">Nucleotide-binding</keyword>
<keyword id="KW-0677">Repeat</keyword>
<keyword id="KW-0742">SOS response</keyword>
<keyword id="KW-0862">Zinc</keyword>
<keyword id="KW-0863">Zinc-finger</keyword>